<organism>
    <name type="scientific">Shewanella halifaxensis (strain HAW-EB4)</name>
    <dbReference type="NCBI Taxonomy" id="458817"/>
    <lineage>
        <taxon>Bacteria</taxon>
        <taxon>Pseudomonadati</taxon>
        <taxon>Pseudomonadota</taxon>
        <taxon>Gammaproteobacteria</taxon>
        <taxon>Alteromonadales</taxon>
        <taxon>Shewanellaceae</taxon>
        <taxon>Shewanella</taxon>
    </lineage>
</organism>
<proteinExistence type="inferred from homology"/>
<keyword id="KW-0963">Cytoplasm</keyword>
<keyword id="KW-0489">Methyltransferase</keyword>
<keyword id="KW-0694">RNA-binding</keyword>
<keyword id="KW-0698">rRNA processing</keyword>
<keyword id="KW-0949">S-adenosyl-L-methionine</keyword>
<keyword id="KW-0808">Transferase</keyword>
<accession>B0TIZ6</accession>
<name>RSMF_SHEHH</name>
<evidence type="ECO:0000255" key="1">
    <source>
        <dbReference type="HAMAP-Rule" id="MF_01579"/>
    </source>
</evidence>
<dbReference type="EC" id="2.1.1.178" evidence="1"/>
<dbReference type="EMBL" id="CP000931">
    <property type="protein sequence ID" value="ABZ76931.1"/>
    <property type="molecule type" value="Genomic_DNA"/>
</dbReference>
<dbReference type="RefSeq" id="WP_012277459.1">
    <property type="nucleotide sequence ID" value="NC_010334.1"/>
</dbReference>
<dbReference type="SMR" id="B0TIZ6"/>
<dbReference type="STRING" id="458817.Shal_2372"/>
<dbReference type="KEGG" id="shl:Shal_2372"/>
<dbReference type="eggNOG" id="COG0144">
    <property type="taxonomic scope" value="Bacteria"/>
</dbReference>
<dbReference type="eggNOG" id="COG3270">
    <property type="taxonomic scope" value="Bacteria"/>
</dbReference>
<dbReference type="HOGENOM" id="CLU_005316_6_2_6"/>
<dbReference type="OrthoDB" id="9810297at2"/>
<dbReference type="Proteomes" id="UP000001317">
    <property type="component" value="Chromosome"/>
</dbReference>
<dbReference type="GO" id="GO:0005737">
    <property type="term" value="C:cytoplasm"/>
    <property type="evidence" value="ECO:0007669"/>
    <property type="project" value="UniProtKB-SubCell"/>
</dbReference>
<dbReference type="GO" id="GO:0003723">
    <property type="term" value="F:RNA binding"/>
    <property type="evidence" value="ECO:0007669"/>
    <property type="project" value="UniProtKB-KW"/>
</dbReference>
<dbReference type="GO" id="GO:0009383">
    <property type="term" value="F:rRNA (cytosine-C5-)-methyltransferase activity"/>
    <property type="evidence" value="ECO:0007669"/>
    <property type="project" value="TreeGrafter"/>
</dbReference>
<dbReference type="GO" id="GO:0070475">
    <property type="term" value="P:rRNA base methylation"/>
    <property type="evidence" value="ECO:0007669"/>
    <property type="project" value="TreeGrafter"/>
</dbReference>
<dbReference type="CDD" id="cd02440">
    <property type="entry name" value="AdoMet_MTases"/>
    <property type="match status" value="1"/>
</dbReference>
<dbReference type="Gene3D" id="3.10.450.720">
    <property type="match status" value="1"/>
</dbReference>
<dbReference type="Gene3D" id="3.40.50.150">
    <property type="entry name" value="Vaccinia Virus protein VP39"/>
    <property type="match status" value="1"/>
</dbReference>
<dbReference type="HAMAP" id="MF_01579">
    <property type="entry name" value="16SrRNA_methyltr_F"/>
    <property type="match status" value="1"/>
</dbReference>
<dbReference type="InterPro" id="IPR031341">
    <property type="entry name" value="Methyltr_RsmF_N"/>
</dbReference>
<dbReference type="InterPro" id="IPR049560">
    <property type="entry name" value="MeTrfase_RsmB-F_NOP2_cat"/>
</dbReference>
<dbReference type="InterPro" id="IPR001678">
    <property type="entry name" value="MeTrfase_RsmB-F_NOP2_dom"/>
</dbReference>
<dbReference type="InterPro" id="IPR027391">
    <property type="entry name" value="Nol1_Nop2_Fmu_2"/>
</dbReference>
<dbReference type="InterPro" id="IPR011023">
    <property type="entry name" value="Nop2p"/>
</dbReference>
<dbReference type="InterPro" id="IPR023267">
    <property type="entry name" value="RCMT"/>
</dbReference>
<dbReference type="InterPro" id="IPR023545">
    <property type="entry name" value="rRNA_ssu_MeTfrase_F"/>
</dbReference>
<dbReference type="InterPro" id="IPR029063">
    <property type="entry name" value="SAM-dependent_MTases_sf"/>
</dbReference>
<dbReference type="InterPro" id="IPR048457">
    <property type="entry name" value="YebU_pre-PUA_dom"/>
</dbReference>
<dbReference type="NCBIfam" id="TIGR00446">
    <property type="entry name" value="nop2p"/>
    <property type="match status" value="1"/>
</dbReference>
<dbReference type="NCBIfam" id="NF008898">
    <property type="entry name" value="PRK11933.1"/>
    <property type="match status" value="1"/>
</dbReference>
<dbReference type="PANTHER" id="PTHR22807:SF30">
    <property type="entry name" value="28S RRNA (CYTOSINE(4447)-C(5))-METHYLTRANSFERASE-RELATED"/>
    <property type="match status" value="1"/>
</dbReference>
<dbReference type="PANTHER" id="PTHR22807">
    <property type="entry name" value="NOP2 YEAST -RELATED NOL1/NOP2/FMU SUN DOMAIN-CONTAINING"/>
    <property type="match status" value="1"/>
</dbReference>
<dbReference type="Pfam" id="PF01189">
    <property type="entry name" value="Methyltr_RsmB-F"/>
    <property type="match status" value="1"/>
</dbReference>
<dbReference type="Pfam" id="PF17125">
    <property type="entry name" value="Methyltr_RsmF_N"/>
    <property type="match status" value="1"/>
</dbReference>
<dbReference type="Pfam" id="PF13636">
    <property type="entry name" value="Methyltranf_PUA"/>
    <property type="match status" value="1"/>
</dbReference>
<dbReference type="Pfam" id="PF21150">
    <property type="entry name" value="YebU_pre-PUA_dom"/>
    <property type="match status" value="1"/>
</dbReference>
<dbReference type="PRINTS" id="PR02008">
    <property type="entry name" value="RCMTFAMILY"/>
</dbReference>
<dbReference type="SUPFAM" id="SSF53335">
    <property type="entry name" value="S-adenosyl-L-methionine-dependent methyltransferases"/>
    <property type="match status" value="1"/>
</dbReference>
<dbReference type="PROSITE" id="PS51686">
    <property type="entry name" value="SAM_MT_RSMB_NOP"/>
    <property type="match status" value="1"/>
</dbReference>
<feature type="chain" id="PRO_1000087931" description="Ribosomal RNA small subunit methyltransferase F">
    <location>
        <begin position="1"/>
        <end position="479"/>
    </location>
</feature>
<feature type="active site" description="Nucleophile" evidence="1">
    <location>
        <position position="250"/>
    </location>
</feature>
<feature type="binding site" evidence="1">
    <location>
        <begin position="128"/>
        <end position="134"/>
    </location>
    <ligand>
        <name>S-adenosyl-L-methionine</name>
        <dbReference type="ChEBI" id="CHEBI:59789"/>
    </ligand>
</feature>
<feature type="binding site" evidence="1">
    <location>
        <position position="152"/>
    </location>
    <ligand>
        <name>S-adenosyl-L-methionine</name>
        <dbReference type="ChEBI" id="CHEBI:59789"/>
    </ligand>
</feature>
<feature type="binding site" evidence="1">
    <location>
        <position position="179"/>
    </location>
    <ligand>
        <name>S-adenosyl-L-methionine</name>
        <dbReference type="ChEBI" id="CHEBI:59789"/>
    </ligand>
</feature>
<feature type="binding site" evidence="1">
    <location>
        <position position="197"/>
    </location>
    <ligand>
        <name>S-adenosyl-L-methionine</name>
        <dbReference type="ChEBI" id="CHEBI:59789"/>
    </ligand>
</feature>
<comment type="function">
    <text evidence="1">Specifically methylates the cytosine at position 1407 (m5C1407) of 16S rRNA.</text>
</comment>
<comment type="catalytic activity">
    <reaction evidence="1">
        <text>cytidine(1407) in 16S rRNA + S-adenosyl-L-methionine = 5-methylcytidine(1407) in 16S rRNA + S-adenosyl-L-homocysteine + H(+)</text>
        <dbReference type="Rhea" id="RHEA:42756"/>
        <dbReference type="Rhea" id="RHEA-COMP:10223"/>
        <dbReference type="Rhea" id="RHEA-COMP:10224"/>
        <dbReference type="ChEBI" id="CHEBI:15378"/>
        <dbReference type="ChEBI" id="CHEBI:57856"/>
        <dbReference type="ChEBI" id="CHEBI:59789"/>
        <dbReference type="ChEBI" id="CHEBI:74483"/>
        <dbReference type="ChEBI" id="CHEBI:82748"/>
        <dbReference type="EC" id="2.1.1.178"/>
    </reaction>
</comment>
<comment type="subcellular location">
    <subcellularLocation>
        <location evidence="1">Cytoplasm</location>
    </subcellularLocation>
</comment>
<comment type="similarity">
    <text evidence="1">Belongs to the class I-like SAM-binding methyltransferase superfamily. RsmB/NOP family.</text>
</comment>
<reference key="1">
    <citation type="submission" date="2008-01" db="EMBL/GenBank/DDBJ databases">
        <title>Complete sequence of Shewanella halifaxensis HAW-EB4.</title>
        <authorList>
            <consortium name="US DOE Joint Genome Institute"/>
            <person name="Copeland A."/>
            <person name="Lucas S."/>
            <person name="Lapidus A."/>
            <person name="Glavina del Rio T."/>
            <person name="Dalin E."/>
            <person name="Tice H."/>
            <person name="Bruce D."/>
            <person name="Goodwin L."/>
            <person name="Pitluck S."/>
            <person name="Sims D."/>
            <person name="Brettin T."/>
            <person name="Detter J.C."/>
            <person name="Han C."/>
            <person name="Kuske C.R."/>
            <person name="Schmutz J."/>
            <person name="Larimer F."/>
            <person name="Land M."/>
            <person name="Hauser L."/>
            <person name="Kyrpides N."/>
            <person name="Kim E."/>
            <person name="Zhao J.-S."/>
            <person name="Richardson P."/>
        </authorList>
    </citation>
    <scope>NUCLEOTIDE SEQUENCE [LARGE SCALE GENOMIC DNA]</scope>
    <source>
        <strain>HAW-EB4</strain>
    </source>
</reference>
<protein>
    <recommendedName>
        <fullName evidence="1">Ribosomal RNA small subunit methyltransferase F</fullName>
        <ecNumber evidence="1">2.1.1.178</ecNumber>
    </recommendedName>
    <alternativeName>
        <fullName evidence="1">16S rRNA m5C1407 methyltransferase</fullName>
    </alternativeName>
    <alternativeName>
        <fullName evidence="1">rRNA (cytosine-C(5)-)-methyltransferase RsmF</fullName>
    </alternativeName>
</protein>
<sequence>MAHFNQNFLDSIERDLPSHLSMEDFIAYSNKPLRLSIRVNTLKISTENFIDLMSAKGWSFDPIPWCNQGFWVTISSDLQLGNTIEHLQGLFYIQEASSMLPPTALFDSHADNENDLSQFAQTRVLDMASAPGSKTTQIAALMNNQGLLVANEYSASRVKVLHANVARMGVSNCALTHFDARVFGEYLFETFDSVLLDAPCSGEGTIRKDPDALKNWDNNDNKGIVDTQKALIESAFLALKVGGCLVYSTCALSRQENQDVCHHLKTAFGEAVEFAALTELFPDADKACTEEGFLHVWPQIYDSEGFFVAKIRKVSAVERTLPEPKMQKNFPFTAAKTKQIEELTAYFEDSFAITLPTDAEIMVRDLEFWLFPKAVMPLIGKMRFQRIGIKLADALKKGYKVRHEAILALSSPTRFELSDEQAKEFLMGRDISLVEKVKPQGEVIVSYASNPLGVAKHLGNKLKNNLPRDLVKDKIALYQ</sequence>
<gene>
    <name evidence="1" type="primary">rsmF</name>
    <name type="ordered locus">Shal_2372</name>
</gene>